<dbReference type="EC" id="2.1.1.-" evidence="5"/>
<dbReference type="EMBL" id="BBTG02000019">
    <property type="protein sequence ID" value="GAO19109.1"/>
    <property type="molecule type" value="Genomic_DNA"/>
</dbReference>
<dbReference type="GlyCosmos" id="A0A1B5L6A5">
    <property type="glycosylation" value="4 sites, No reported glycans"/>
</dbReference>
<dbReference type="Proteomes" id="UP000054053">
    <property type="component" value="Unassembled WGS sequence"/>
</dbReference>
<dbReference type="GO" id="GO:0016020">
    <property type="term" value="C:membrane"/>
    <property type="evidence" value="ECO:0007669"/>
    <property type="project" value="UniProtKB-SubCell"/>
</dbReference>
<dbReference type="GO" id="GO:0008168">
    <property type="term" value="F:methyltransferase activity"/>
    <property type="evidence" value="ECO:0007669"/>
    <property type="project" value="UniProtKB-KW"/>
</dbReference>
<dbReference type="GO" id="GO:0032259">
    <property type="term" value="P:methylation"/>
    <property type="evidence" value="ECO:0007669"/>
    <property type="project" value="UniProtKB-KW"/>
</dbReference>
<dbReference type="Gene3D" id="1.20.120.1630">
    <property type="match status" value="1"/>
</dbReference>
<dbReference type="InterPro" id="IPR010721">
    <property type="entry name" value="UstE-like"/>
</dbReference>
<dbReference type="PANTHER" id="PTHR32251">
    <property type="entry name" value="3-OXO-5-ALPHA-STEROID 4-DEHYDROGENASE"/>
    <property type="match status" value="1"/>
</dbReference>
<dbReference type="PANTHER" id="PTHR32251:SF15">
    <property type="entry name" value="3-OXO-5-ALPHA-STEROID 4-DEHYDROGENASE (DUF1295)"/>
    <property type="match status" value="1"/>
</dbReference>
<dbReference type="Pfam" id="PF06966">
    <property type="entry name" value="DUF1295"/>
    <property type="match status" value="1"/>
</dbReference>
<dbReference type="PROSITE" id="PS50244">
    <property type="entry name" value="S5A_REDUCTASE"/>
    <property type="match status" value="1"/>
</dbReference>
<reference key="1">
    <citation type="journal article" date="2016" name="Genome Announc.">
        <title>Genome sequence of Ustilaginoidea virens IPU010, a rice pathogenic fungus causing false smut.</title>
        <authorList>
            <person name="Kumagai T."/>
            <person name="Ishii T."/>
            <person name="Terai G."/>
            <person name="Umemura M."/>
            <person name="Machida M."/>
            <person name="Asai K."/>
        </authorList>
    </citation>
    <scope>NUCLEOTIDE SEQUENCE [LARGE SCALE GENOMIC DNA]</scope>
    <source>
        <strain>IPU010</strain>
    </source>
</reference>
<reference key="2">
    <citation type="journal article" date="2019" name="Angew. Chem. Int. Ed.">
        <title>Enantioselective phenol coupling by laccases in the biosynthesis of fungal dimeric naphthopyrones.</title>
        <authorList>
            <person name="Obermaier S."/>
            <person name="Thiele W."/>
            <person name="Fuertges L."/>
            <person name="Mueller M."/>
        </authorList>
    </citation>
    <scope>FUNCTION</scope>
    <scope>PATHWAY</scope>
    <source>
        <strain>IPU010</strain>
    </source>
</reference>
<protein>
    <recommendedName>
        <fullName evidence="4">Probable O-methyltransferase ustE</fullName>
        <ecNumber evidence="5">2.1.1.-</ecNumber>
    </recommendedName>
    <alternativeName>
        <fullName evidence="4">Ustilaginoidins biosynthesis cluster protein E</fullName>
    </alternativeName>
</protein>
<name>USTE_USTVR</name>
<comment type="function">
    <text evidence="3 6">Probable O-methyltransferase; part of the gene cluster that mediates the biosynthesis of ustilaginoidins, dimeric gamma-naphthopyrones isolated from different fungal species (PubMed:31050129). The first step in the biosynthesis of ustilaginoidins is the production of gamma-naphthopyrone precursor YWA1 by the non-reducing polyketide synthase ustP, via condensation of one acetyl-CoA starter unit with 6 malonyl-CoA units (PubMed:31050129). YWA1 is then probably substrate of the ustZ to yield norrubrofusarin via a dehydration reaction (Probable). A key enzyme in the biosynthetic pathway is the laccase ustL, which catalyzes the oxidative dimerization of norrubrofusarin to ustilaginoidin A (PubMed:31050129). It can produce the M- and P-atropisomers in varying amounts, depending on the reaction conditions (PubMed:31050129). For the biosynthesis of 3-methylustilaginoid in derivatives such as chaetochromin A, a methylated derivative of YWA1 is required (Probable). The C-methylation is considered to be catalyzed by ustM, the phosphopantetheine attachment site of which indicates that it acts on the growing polyketide chain before release of the product (Probable). For the biosynthesis of chaetochromin A, it is assumed that saturation of the D2 double bond takes place before dimerization, and is probably catalyzed by an external reductase because no candidate gene was identified within the cluster (Probable).</text>
</comment>
<comment type="pathway">
    <text evidence="6">Secondary metabolite biosynthesis.</text>
</comment>
<comment type="subcellular location">
    <subcellularLocation>
        <location evidence="1">Membrane</location>
        <topology evidence="1">Multi-pass membrane protein</topology>
    </subcellularLocation>
</comment>
<comment type="similarity">
    <text evidence="5">Belongs to the class VI-like SAM-binding methyltransferase superfamily. Isoprenylcysteine carboxyl methyltransferase family.</text>
</comment>
<feature type="chain" id="PRO_0000448925" description="Probable O-methyltransferase ustE">
    <location>
        <begin position="1"/>
        <end position="284"/>
    </location>
</feature>
<feature type="transmembrane region" description="Helical" evidence="1">
    <location>
        <begin position="88"/>
        <end position="108"/>
    </location>
</feature>
<feature type="transmembrane region" description="Helical" evidence="1">
    <location>
        <begin position="157"/>
        <end position="177"/>
    </location>
</feature>
<feature type="transmembrane region" description="Helical" evidence="1">
    <location>
        <begin position="215"/>
        <end position="235"/>
    </location>
</feature>
<feature type="glycosylation site" description="N-linked (GlcNAc...) asparagine" evidence="2">
    <location>
        <position position="22"/>
    </location>
</feature>
<feature type="glycosylation site" description="N-linked (GlcNAc...) asparagine" evidence="2">
    <location>
        <position position="29"/>
    </location>
</feature>
<feature type="glycosylation site" description="N-linked (GlcNAc...) asparagine" evidence="2">
    <location>
        <position position="205"/>
    </location>
</feature>
<feature type="glycosylation site" description="N-linked (GlcNAc...) asparagine" evidence="2">
    <location>
        <position position="264"/>
    </location>
</feature>
<proteinExistence type="inferred from homology"/>
<evidence type="ECO:0000255" key="1"/>
<evidence type="ECO:0000255" key="2">
    <source>
        <dbReference type="PROSITE-ProRule" id="PRU00498"/>
    </source>
</evidence>
<evidence type="ECO:0000269" key="3">
    <source>
    </source>
</evidence>
<evidence type="ECO:0000303" key="4">
    <source>
    </source>
</evidence>
<evidence type="ECO:0000305" key="5"/>
<evidence type="ECO:0000305" key="6">
    <source>
    </source>
</evidence>
<gene>
    <name evidence="4" type="primary">ustE</name>
    <name type="ORF">UVI_02036190</name>
</gene>
<organism>
    <name type="scientific">Ustilaginoidea virens</name>
    <name type="common">Rice false smut fungus</name>
    <name type="synonym">Villosiclava virens</name>
    <dbReference type="NCBI Taxonomy" id="1159556"/>
    <lineage>
        <taxon>Eukaryota</taxon>
        <taxon>Fungi</taxon>
        <taxon>Dikarya</taxon>
        <taxon>Ascomycota</taxon>
        <taxon>Pezizomycotina</taxon>
        <taxon>Sordariomycetes</taxon>
        <taxon>Hypocreomycetidae</taxon>
        <taxon>Hypocreales</taxon>
        <taxon>Clavicipitaceae</taxon>
        <taxon>Ustilaginoidea</taxon>
    </lineage>
</organism>
<sequence>MADAKAVAKAELKSKDFVPRGNKSSSPLNTTLYLGLRALDCYIQYLILSRATGSFIIKFFGGSIIPHGPPVEAGFMHIEKLGLSGYRLLLLFMDILAAAKHFWFVLTVAEEAWTLTGAIVVGLDNIFFDTLNNLLFLCAATSAASSKAGGETLANPYLATGFIIFAVGLVTECVCEIDRKVFKKNPMNKGKPYTGGLFSLVRHPNYTAFTIWRSGLALASGGMIYGMSIAMFFMWDFSNRAVPALDEYCTKRVSYGPRDSTSTNWSRIWLLMTSSLVRRYVGRV</sequence>
<keyword id="KW-0325">Glycoprotein</keyword>
<keyword id="KW-0472">Membrane</keyword>
<keyword id="KW-0489">Methyltransferase</keyword>
<keyword id="KW-0949">S-adenosyl-L-methionine</keyword>
<keyword id="KW-0808">Transferase</keyword>
<keyword id="KW-0812">Transmembrane</keyword>
<keyword id="KW-1133">Transmembrane helix</keyword>
<accession>A0A1B5L6A5</accession>